<dbReference type="EC" id="3.6.5.-" evidence="1"/>
<dbReference type="EMBL" id="CR555306">
    <property type="protein sequence ID" value="CAI06567.1"/>
    <property type="molecule type" value="Genomic_DNA"/>
</dbReference>
<dbReference type="RefSeq" id="WP_011236300.1">
    <property type="nucleotide sequence ID" value="NC_006513.1"/>
</dbReference>
<dbReference type="SMR" id="Q5P7Z4"/>
<dbReference type="STRING" id="76114.ebA843"/>
<dbReference type="KEGG" id="eba:ebA843"/>
<dbReference type="eggNOG" id="COG0536">
    <property type="taxonomic scope" value="Bacteria"/>
</dbReference>
<dbReference type="HOGENOM" id="CLU_011747_2_0_4"/>
<dbReference type="OrthoDB" id="9807318at2"/>
<dbReference type="Proteomes" id="UP000006552">
    <property type="component" value="Chromosome"/>
</dbReference>
<dbReference type="GO" id="GO:0005737">
    <property type="term" value="C:cytoplasm"/>
    <property type="evidence" value="ECO:0007669"/>
    <property type="project" value="UniProtKB-SubCell"/>
</dbReference>
<dbReference type="GO" id="GO:0005525">
    <property type="term" value="F:GTP binding"/>
    <property type="evidence" value="ECO:0007669"/>
    <property type="project" value="UniProtKB-UniRule"/>
</dbReference>
<dbReference type="GO" id="GO:0003924">
    <property type="term" value="F:GTPase activity"/>
    <property type="evidence" value="ECO:0007669"/>
    <property type="project" value="UniProtKB-UniRule"/>
</dbReference>
<dbReference type="GO" id="GO:0000287">
    <property type="term" value="F:magnesium ion binding"/>
    <property type="evidence" value="ECO:0007669"/>
    <property type="project" value="InterPro"/>
</dbReference>
<dbReference type="GO" id="GO:0042254">
    <property type="term" value="P:ribosome biogenesis"/>
    <property type="evidence" value="ECO:0007669"/>
    <property type="project" value="UniProtKB-UniRule"/>
</dbReference>
<dbReference type="CDD" id="cd01898">
    <property type="entry name" value="Obg"/>
    <property type="match status" value="1"/>
</dbReference>
<dbReference type="FunFam" id="2.70.210.12:FF:000001">
    <property type="entry name" value="GTPase Obg"/>
    <property type="match status" value="1"/>
</dbReference>
<dbReference type="Gene3D" id="2.70.210.12">
    <property type="entry name" value="GTP1/OBG domain"/>
    <property type="match status" value="1"/>
</dbReference>
<dbReference type="Gene3D" id="3.40.50.300">
    <property type="entry name" value="P-loop containing nucleotide triphosphate hydrolases"/>
    <property type="match status" value="1"/>
</dbReference>
<dbReference type="HAMAP" id="MF_01454">
    <property type="entry name" value="GTPase_Obg"/>
    <property type="match status" value="1"/>
</dbReference>
<dbReference type="InterPro" id="IPR031167">
    <property type="entry name" value="G_OBG"/>
</dbReference>
<dbReference type="InterPro" id="IPR006073">
    <property type="entry name" value="GTP-bd"/>
</dbReference>
<dbReference type="InterPro" id="IPR014100">
    <property type="entry name" value="GTP-bd_Obg/CgtA"/>
</dbReference>
<dbReference type="InterPro" id="IPR006074">
    <property type="entry name" value="GTP1-OBG_CS"/>
</dbReference>
<dbReference type="InterPro" id="IPR006169">
    <property type="entry name" value="GTP1_OBG_dom"/>
</dbReference>
<dbReference type="InterPro" id="IPR036726">
    <property type="entry name" value="GTP1_OBG_dom_sf"/>
</dbReference>
<dbReference type="InterPro" id="IPR045086">
    <property type="entry name" value="OBG_GTPase"/>
</dbReference>
<dbReference type="InterPro" id="IPR027417">
    <property type="entry name" value="P-loop_NTPase"/>
</dbReference>
<dbReference type="NCBIfam" id="TIGR02729">
    <property type="entry name" value="Obg_CgtA"/>
    <property type="match status" value="1"/>
</dbReference>
<dbReference type="NCBIfam" id="NF008954">
    <property type="entry name" value="PRK12296.1"/>
    <property type="match status" value="1"/>
</dbReference>
<dbReference type="NCBIfam" id="NF008955">
    <property type="entry name" value="PRK12297.1"/>
    <property type="match status" value="1"/>
</dbReference>
<dbReference type="NCBIfam" id="NF008956">
    <property type="entry name" value="PRK12299.1"/>
    <property type="match status" value="1"/>
</dbReference>
<dbReference type="PANTHER" id="PTHR11702">
    <property type="entry name" value="DEVELOPMENTALLY REGULATED GTP-BINDING PROTEIN-RELATED"/>
    <property type="match status" value="1"/>
</dbReference>
<dbReference type="PANTHER" id="PTHR11702:SF31">
    <property type="entry name" value="MITOCHONDRIAL RIBOSOME-ASSOCIATED GTPASE 2"/>
    <property type="match status" value="1"/>
</dbReference>
<dbReference type="Pfam" id="PF01018">
    <property type="entry name" value="GTP1_OBG"/>
    <property type="match status" value="1"/>
</dbReference>
<dbReference type="Pfam" id="PF01926">
    <property type="entry name" value="MMR_HSR1"/>
    <property type="match status" value="1"/>
</dbReference>
<dbReference type="PIRSF" id="PIRSF002401">
    <property type="entry name" value="GTP_bd_Obg/CgtA"/>
    <property type="match status" value="1"/>
</dbReference>
<dbReference type="PRINTS" id="PR00326">
    <property type="entry name" value="GTP1OBG"/>
</dbReference>
<dbReference type="SUPFAM" id="SSF82051">
    <property type="entry name" value="Obg GTP-binding protein N-terminal domain"/>
    <property type="match status" value="1"/>
</dbReference>
<dbReference type="SUPFAM" id="SSF52540">
    <property type="entry name" value="P-loop containing nucleoside triphosphate hydrolases"/>
    <property type="match status" value="1"/>
</dbReference>
<dbReference type="PROSITE" id="PS51710">
    <property type="entry name" value="G_OBG"/>
    <property type="match status" value="1"/>
</dbReference>
<dbReference type="PROSITE" id="PS00905">
    <property type="entry name" value="GTP1_OBG"/>
    <property type="match status" value="1"/>
</dbReference>
<dbReference type="PROSITE" id="PS51883">
    <property type="entry name" value="OBG"/>
    <property type="match status" value="1"/>
</dbReference>
<proteinExistence type="inferred from homology"/>
<evidence type="ECO:0000255" key="1">
    <source>
        <dbReference type="HAMAP-Rule" id="MF_01454"/>
    </source>
</evidence>
<evidence type="ECO:0000255" key="2">
    <source>
        <dbReference type="PROSITE-ProRule" id="PRU01231"/>
    </source>
</evidence>
<evidence type="ECO:0000256" key="3">
    <source>
        <dbReference type="SAM" id="MobiDB-lite"/>
    </source>
</evidence>
<comment type="function">
    <text evidence="1">An essential GTPase which binds GTP, GDP and possibly (p)ppGpp with moderate affinity, with high nucleotide exchange rates and a fairly low GTP hydrolysis rate. Plays a role in control of the cell cycle, stress response, ribosome biogenesis and in those bacteria that undergo differentiation, in morphogenesis control.</text>
</comment>
<comment type="cofactor">
    <cofactor evidence="1">
        <name>Mg(2+)</name>
        <dbReference type="ChEBI" id="CHEBI:18420"/>
    </cofactor>
</comment>
<comment type="subunit">
    <text evidence="1">Monomer.</text>
</comment>
<comment type="subcellular location">
    <subcellularLocation>
        <location evidence="1">Cytoplasm</location>
    </subcellularLocation>
</comment>
<comment type="similarity">
    <text evidence="1">Belongs to the TRAFAC class OBG-HflX-like GTPase superfamily. OBG GTPase family.</text>
</comment>
<protein>
    <recommendedName>
        <fullName evidence="1">GTPase Obg</fullName>
        <ecNumber evidence="1">3.6.5.-</ecNumber>
    </recommendedName>
    <alternativeName>
        <fullName evidence="1">GTP-binding protein Obg</fullName>
    </alternativeName>
</protein>
<feature type="chain" id="PRO_0000385709" description="GTPase Obg">
    <location>
        <begin position="1"/>
        <end position="404"/>
    </location>
</feature>
<feature type="domain" description="Obg" evidence="2">
    <location>
        <begin position="1"/>
        <end position="159"/>
    </location>
</feature>
<feature type="domain" description="OBG-type G" evidence="1">
    <location>
        <begin position="160"/>
        <end position="334"/>
    </location>
</feature>
<feature type="region of interest" description="Disordered" evidence="3">
    <location>
        <begin position="22"/>
        <end position="43"/>
    </location>
</feature>
<feature type="region of interest" description="Disordered" evidence="3">
    <location>
        <begin position="373"/>
        <end position="404"/>
    </location>
</feature>
<feature type="compositionally biased region" description="Gly residues" evidence="3">
    <location>
        <begin position="33"/>
        <end position="43"/>
    </location>
</feature>
<feature type="binding site" evidence="1">
    <location>
        <begin position="166"/>
        <end position="173"/>
    </location>
    <ligand>
        <name>GTP</name>
        <dbReference type="ChEBI" id="CHEBI:37565"/>
    </ligand>
</feature>
<feature type="binding site" evidence="1">
    <location>
        <position position="173"/>
    </location>
    <ligand>
        <name>Mg(2+)</name>
        <dbReference type="ChEBI" id="CHEBI:18420"/>
    </ligand>
</feature>
<feature type="binding site" evidence="1">
    <location>
        <begin position="191"/>
        <end position="195"/>
    </location>
    <ligand>
        <name>GTP</name>
        <dbReference type="ChEBI" id="CHEBI:37565"/>
    </ligand>
</feature>
<feature type="binding site" evidence="1">
    <location>
        <position position="193"/>
    </location>
    <ligand>
        <name>Mg(2+)</name>
        <dbReference type="ChEBI" id="CHEBI:18420"/>
    </ligand>
</feature>
<feature type="binding site" evidence="1">
    <location>
        <begin position="213"/>
        <end position="216"/>
    </location>
    <ligand>
        <name>GTP</name>
        <dbReference type="ChEBI" id="CHEBI:37565"/>
    </ligand>
</feature>
<feature type="binding site" evidence="1">
    <location>
        <begin position="284"/>
        <end position="287"/>
    </location>
    <ligand>
        <name>GTP</name>
        <dbReference type="ChEBI" id="CHEBI:37565"/>
    </ligand>
</feature>
<feature type="binding site" evidence="1">
    <location>
        <begin position="315"/>
        <end position="317"/>
    </location>
    <ligand>
        <name>GTP</name>
        <dbReference type="ChEBI" id="CHEBI:37565"/>
    </ligand>
</feature>
<reference key="1">
    <citation type="journal article" date="2005" name="Arch. Microbiol.">
        <title>The genome sequence of an anaerobic aromatic-degrading denitrifying bacterium, strain EbN1.</title>
        <authorList>
            <person name="Rabus R."/>
            <person name="Kube M."/>
            <person name="Heider J."/>
            <person name="Beck A."/>
            <person name="Heitmann K."/>
            <person name="Widdel F."/>
            <person name="Reinhardt R."/>
        </authorList>
    </citation>
    <scope>NUCLEOTIDE SEQUENCE [LARGE SCALE GENOMIC DNA]</scope>
    <source>
        <strain>DSM 19018 / LMG 30748 / EbN1</strain>
    </source>
</reference>
<keyword id="KW-0963">Cytoplasm</keyword>
<keyword id="KW-0342">GTP-binding</keyword>
<keyword id="KW-0378">Hydrolase</keyword>
<keyword id="KW-0460">Magnesium</keyword>
<keyword id="KW-0479">Metal-binding</keyword>
<keyword id="KW-0547">Nucleotide-binding</keyword>
<keyword id="KW-1185">Reference proteome</keyword>
<accession>Q5P7Z4</accession>
<name>OBG_AROAE</name>
<organism>
    <name type="scientific">Aromatoleum aromaticum (strain DSM 19018 / LMG 30748 / EbN1)</name>
    <name type="common">Azoarcus sp. (strain EbN1)</name>
    <dbReference type="NCBI Taxonomy" id="76114"/>
    <lineage>
        <taxon>Bacteria</taxon>
        <taxon>Pseudomonadati</taxon>
        <taxon>Pseudomonadota</taxon>
        <taxon>Betaproteobacteria</taxon>
        <taxon>Rhodocyclales</taxon>
        <taxon>Rhodocyclaceae</taxon>
        <taxon>Aromatoleum</taxon>
    </lineage>
</organism>
<sequence>MKFIDEARIEVMAGDGGNGSASFRREKFIPRGGPDGGDGGRGGSIYALADRNLNTLVDYRFTRMHRAQRGENGGNKDCYGKGGEDIVLRMPVGTVITDLETGELVADLDEDGKQAIVARGGKGGLGNLHFKSSVNRAPRKRTMGEEGERRALRLELKVLADVGLLGMPNAGKSTFIRAVSAAKPKVADYPFTTLAPNLGVVRTDQNRSFVIADIPGLIEGAAEGHGLGHQFLRHLQRTRVLLHLVDLAPFDPDADPVRDAKAIVEELRKYDESLYNKPRWLALNKLDLIPEDERAARVAAFLEAYGPVERHFEISALTGDGCRKLVFAIQDFLDAGRAQAEAEKAARTHAEALAAAEAEARVEAAYQARLQALLAEGETGTGDDGRDGNENDPADEQDTNRPNH</sequence>
<gene>
    <name evidence="1" type="primary">obg</name>
    <name type="ordered locus">AZOSEA04450</name>
    <name type="ORF">ebA843</name>
</gene>